<geneLocation type="chloroplast"/>
<organism>
    <name type="scientific">Metasequoia glyptostroboides</name>
    <name type="common">Dawn redwood</name>
    <name type="synonym">Sequoia glyptostroboides</name>
    <dbReference type="NCBI Taxonomy" id="3371"/>
    <lineage>
        <taxon>Eukaryota</taxon>
        <taxon>Viridiplantae</taxon>
        <taxon>Streptophyta</taxon>
        <taxon>Embryophyta</taxon>
        <taxon>Tracheophyta</taxon>
        <taxon>Spermatophyta</taxon>
        <taxon>Pinopsida</taxon>
        <taxon>Pinidae</taxon>
        <taxon>Conifers II</taxon>
        <taxon>Cupressales</taxon>
        <taxon>Cupressaceae</taxon>
        <taxon>Metasequoia</taxon>
    </lineage>
</organism>
<protein>
    <recommendedName>
        <fullName evidence="1">Cytochrome b559 subunit beta</fullName>
    </recommendedName>
    <alternativeName>
        <fullName evidence="1">PSII reaction center subunit VI</fullName>
    </alternativeName>
</protein>
<sequence>MTIDRTYPIFTVRWLAVHGLAVPTVFFLGSISAMQFIQR</sequence>
<feature type="chain" id="PRO_0000200421" description="Cytochrome b559 subunit beta">
    <location>
        <begin position="1"/>
        <end position="39"/>
    </location>
</feature>
<feature type="transmembrane region" description="Helical" evidence="1">
    <location>
        <begin position="14"/>
        <end position="30"/>
    </location>
</feature>
<feature type="binding site" description="axial binding residue" evidence="1">
    <location>
        <position position="18"/>
    </location>
    <ligand>
        <name>heme</name>
        <dbReference type="ChEBI" id="CHEBI:30413"/>
        <note>ligand shared with alpha subunit</note>
    </ligand>
    <ligandPart>
        <name>Fe</name>
        <dbReference type="ChEBI" id="CHEBI:18248"/>
    </ligandPart>
</feature>
<comment type="function">
    <text evidence="1">This b-type cytochrome is tightly associated with the reaction center of photosystem II (PSII). PSII is a light-driven water:plastoquinone oxidoreductase that uses light energy to abstract electrons from H(2)O, generating O(2) and a proton gradient subsequently used for ATP formation. It consists of a core antenna complex that captures photons, and an electron transfer chain that converts photonic excitation into a charge separation.</text>
</comment>
<comment type="cofactor">
    <cofactor evidence="1">
        <name>heme b</name>
        <dbReference type="ChEBI" id="CHEBI:60344"/>
    </cofactor>
    <text evidence="1">With its partner (PsbE) binds heme. PSII binds additional chlorophylls, carotenoids and specific lipids.</text>
</comment>
<comment type="subunit">
    <text evidence="1">Heterodimer of an alpha subunit and a beta subunit. PSII is composed of 1 copy each of membrane proteins PsbA, PsbB, PsbC, PsbD, PsbE, PsbF, PsbH, PsbI, PsbJ, PsbK, PsbL, PsbM, PsbT, PsbX, PsbY, PsbZ, Psb30/Ycf12, at least 3 peripheral proteins of the oxygen-evolving complex and a large number of cofactors. It forms dimeric complexes.</text>
</comment>
<comment type="subcellular location">
    <subcellularLocation>
        <location evidence="1">Plastid</location>
        <location evidence="1">Chloroplast thylakoid membrane</location>
        <topology evidence="1">Single-pass membrane protein</topology>
    </subcellularLocation>
</comment>
<comment type="similarity">
    <text evidence="1">Belongs to the PsbE/PsbF family.</text>
</comment>
<proteinExistence type="inferred from homology"/>
<accession>Q71L59</accession>
<evidence type="ECO:0000255" key="1">
    <source>
        <dbReference type="HAMAP-Rule" id="MF_00643"/>
    </source>
</evidence>
<reference key="1">
    <citation type="journal article" date="2003" name="Mol. Phylogenet. Evol.">
        <title>Inference of higher-order relationships in the cycads from a large chloroplast data set.</title>
        <authorList>
            <person name="Rai H.S."/>
            <person name="O'Brien H.E."/>
            <person name="Reeves P.A."/>
            <person name="Olmstead R.G."/>
            <person name="Graham S.W."/>
        </authorList>
    </citation>
    <scope>NUCLEOTIDE SEQUENCE [GENOMIC DNA]</scope>
</reference>
<name>PSBF_METGY</name>
<gene>
    <name evidence="1" type="primary">psbF</name>
</gene>
<keyword id="KW-0150">Chloroplast</keyword>
<keyword id="KW-0249">Electron transport</keyword>
<keyword id="KW-0349">Heme</keyword>
<keyword id="KW-0408">Iron</keyword>
<keyword id="KW-0472">Membrane</keyword>
<keyword id="KW-0479">Metal-binding</keyword>
<keyword id="KW-0602">Photosynthesis</keyword>
<keyword id="KW-0604">Photosystem II</keyword>
<keyword id="KW-0934">Plastid</keyword>
<keyword id="KW-0793">Thylakoid</keyword>
<keyword id="KW-0812">Transmembrane</keyword>
<keyword id="KW-1133">Transmembrane helix</keyword>
<keyword id="KW-0813">Transport</keyword>
<dbReference type="EMBL" id="AF469719">
    <property type="protein sequence ID" value="AAQ05245.1"/>
    <property type="molecule type" value="Genomic_DNA"/>
</dbReference>
<dbReference type="RefSeq" id="YP_009154371.1">
    <property type="nucleotide sequence ID" value="NC_027423.1"/>
</dbReference>
<dbReference type="SMR" id="Q71L59"/>
<dbReference type="GeneID" id="24707276"/>
<dbReference type="GO" id="GO:0009535">
    <property type="term" value="C:chloroplast thylakoid membrane"/>
    <property type="evidence" value="ECO:0007669"/>
    <property type="project" value="UniProtKB-SubCell"/>
</dbReference>
<dbReference type="GO" id="GO:0009539">
    <property type="term" value="C:photosystem II reaction center"/>
    <property type="evidence" value="ECO:0007669"/>
    <property type="project" value="InterPro"/>
</dbReference>
<dbReference type="GO" id="GO:0009055">
    <property type="term" value="F:electron transfer activity"/>
    <property type="evidence" value="ECO:0007669"/>
    <property type="project" value="UniProtKB-UniRule"/>
</dbReference>
<dbReference type="GO" id="GO:0020037">
    <property type="term" value="F:heme binding"/>
    <property type="evidence" value="ECO:0007669"/>
    <property type="project" value="InterPro"/>
</dbReference>
<dbReference type="GO" id="GO:0005506">
    <property type="term" value="F:iron ion binding"/>
    <property type="evidence" value="ECO:0007669"/>
    <property type="project" value="UniProtKB-UniRule"/>
</dbReference>
<dbReference type="GO" id="GO:0009767">
    <property type="term" value="P:photosynthetic electron transport chain"/>
    <property type="evidence" value="ECO:0007669"/>
    <property type="project" value="InterPro"/>
</dbReference>
<dbReference type="HAMAP" id="MF_00643">
    <property type="entry name" value="PSII_PsbF"/>
    <property type="match status" value="1"/>
</dbReference>
<dbReference type="InterPro" id="IPR006241">
    <property type="entry name" value="PSII_cyt_b559_bsu"/>
</dbReference>
<dbReference type="InterPro" id="IPR006216">
    <property type="entry name" value="PSII_cyt_b559_CS"/>
</dbReference>
<dbReference type="InterPro" id="IPR013081">
    <property type="entry name" value="PSII_cyt_b559_N"/>
</dbReference>
<dbReference type="NCBIfam" id="TIGR01333">
    <property type="entry name" value="cyt_b559_beta"/>
    <property type="match status" value="1"/>
</dbReference>
<dbReference type="Pfam" id="PF00283">
    <property type="entry name" value="Cytochrom_B559"/>
    <property type="match status" value="1"/>
</dbReference>
<dbReference type="PIRSF" id="PIRSF000037">
    <property type="entry name" value="PsbF"/>
    <property type="match status" value="1"/>
</dbReference>
<dbReference type="SUPFAM" id="SSF161045">
    <property type="entry name" value="Cytochrome b559 subunits"/>
    <property type="match status" value="1"/>
</dbReference>
<dbReference type="PROSITE" id="PS00537">
    <property type="entry name" value="CYTOCHROME_B559"/>
    <property type="match status" value="1"/>
</dbReference>